<sequence>MSKLFWAMLAFISRLPVPSRWSQGLDFEQYSRGIVMFPFIGLILGGVSGLIFILLQSWCGIPLAALFCILALALLTGGFHLDGLADTCDGIFSARRRERMLEIMRDSRLGTHGGLALIFVLLTKILVVSELALRGTPMLAALAAACAAGRGSAVLLMYRHRYAREEGLGNVFIGKVSGRQTCITLGLAVIVATVLLPGMQGLAAMVVTCAAIFILGQLLKRTLGGQTGDTLGAAIELGELIFLLALL</sequence>
<protein>
    <recommendedName>
        <fullName evidence="1">Adenosylcobinamide-GDP ribazoletransferase</fullName>
        <ecNumber evidence="1">2.7.8.26</ecNumber>
    </recommendedName>
    <alternativeName>
        <fullName evidence="1">Cobalamin synthase</fullName>
    </alternativeName>
    <alternativeName>
        <fullName evidence="1">Cobalamin-5'-phosphate synthase</fullName>
    </alternativeName>
</protein>
<accession>C0Q1Q9</accession>
<keyword id="KW-0997">Cell inner membrane</keyword>
<keyword id="KW-1003">Cell membrane</keyword>
<keyword id="KW-0169">Cobalamin biosynthesis</keyword>
<keyword id="KW-0460">Magnesium</keyword>
<keyword id="KW-0472">Membrane</keyword>
<keyword id="KW-0808">Transferase</keyword>
<keyword id="KW-0812">Transmembrane</keyword>
<keyword id="KW-1133">Transmembrane helix</keyword>
<reference key="1">
    <citation type="journal article" date="2009" name="PLoS ONE">
        <title>Salmonella paratyphi C: genetic divergence from Salmonella choleraesuis and pathogenic convergence with Salmonella typhi.</title>
        <authorList>
            <person name="Liu W.-Q."/>
            <person name="Feng Y."/>
            <person name="Wang Y."/>
            <person name="Zou Q.-H."/>
            <person name="Chen F."/>
            <person name="Guo J.-T."/>
            <person name="Peng Y.-H."/>
            <person name="Jin Y."/>
            <person name="Li Y.-G."/>
            <person name="Hu S.-N."/>
            <person name="Johnston R.N."/>
            <person name="Liu G.-R."/>
            <person name="Liu S.-L."/>
        </authorList>
    </citation>
    <scope>NUCLEOTIDE SEQUENCE [LARGE SCALE GENOMIC DNA]</scope>
    <source>
        <strain>RKS4594</strain>
    </source>
</reference>
<dbReference type="EC" id="2.7.8.26" evidence="1"/>
<dbReference type="EMBL" id="CP000857">
    <property type="protein sequence ID" value="ACN45845.1"/>
    <property type="molecule type" value="Genomic_DNA"/>
</dbReference>
<dbReference type="RefSeq" id="WP_000040005.1">
    <property type="nucleotide sequence ID" value="NC_012125.1"/>
</dbReference>
<dbReference type="KEGG" id="sei:SPC_1698"/>
<dbReference type="HOGENOM" id="CLU_057426_3_1_6"/>
<dbReference type="UniPathway" id="UPA00148">
    <property type="reaction ID" value="UER00238"/>
</dbReference>
<dbReference type="Proteomes" id="UP000001599">
    <property type="component" value="Chromosome"/>
</dbReference>
<dbReference type="GO" id="GO:0005886">
    <property type="term" value="C:plasma membrane"/>
    <property type="evidence" value="ECO:0007669"/>
    <property type="project" value="UniProtKB-SubCell"/>
</dbReference>
<dbReference type="GO" id="GO:0051073">
    <property type="term" value="F:adenosylcobinamide-GDP ribazoletransferase activity"/>
    <property type="evidence" value="ECO:0007669"/>
    <property type="project" value="UniProtKB-UniRule"/>
</dbReference>
<dbReference type="GO" id="GO:0008818">
    <property type="term" value="F:cobalamin 5'-phosphate synthase activity"/>
    <property type="evidence" value="ECO:0007669"/>
    <property type="project" value="UniProtKB-UniRule"/>
</dbReference>
<dbReference type="GO" id="GO:0009236">
    <property type="term" value="P:cobalamin biosynthetic process"/>
    <property type="evidence" value="ECO:0007669"/>
    <property type="project" value="UniProtKB-UniRule"/>
</dbReference>
<dbReference type="HAMAP" id="MF_00719">
    <property type="entry name" value="CobS"/>
    <property type="match status" value="1"/>
</dbReference>
<dbReference type="InterPro" id="IPR003805">
    <property type="entry name" value="CobS"/>
</dbReference>
<dbReference type="NCBIfam" id="TIGR00317">
    <property type="entry name" value="cobS"/>
    <property type="match status" value="1"/>
</dbReference>
<dbReference type="PANTHER" id="PTHR34148">
    <property type="entry name" value="ADENOSYLCOBINAMIDE-GDP RIBAZOLETRANSFERASE"/>
    <property type="match status" value="1"/>
</dbReference>
<dbReference type="PANTHER" id="PTHR34148:SF1">
    <property type="entry name" value="ADENOSYLCOBINAMIDE-GDP RIBAZOLETRANSFERASE"/>
    <property type="match status" value="1"/>
</dbReference>
<dbReference type="Pfam" id="PF02654">
    <property type="entry name" value="CobS"/>
    <property type="match status" value="1"/>
</dbReference>
<proteinExistence type="inferred from homology"/>
<gene>
    <name evidence="1" type="primary">cobS</name>
    <name type="ordered locus">SPC_1698</name>
</gene>
<name>COBS_SALPC</name>
<organism>
    <name type="scientific">Salmonella paratyphi C (strain RKS4594)</name>
    <dbReference type="NCBI Taxonomy" id="476213"/>
    <lineage>
        <taxon>Bacteria</taxon>
        <taxon>Pseudomonadati</taxon>
        <taxon>Pseudomonadota</taxon>
        <taxon>Gammaproteobacteria</taxon>
        <taxon>Enterobacterales</taxon>
        <taxon>Enterobacteriaceae</taxon>
        <taxon>Salmonella</taxon>
    </lineage>
</organism>
<evidence type="ECO:0000255" key="1">
    <source>
        <dbReference type="HAMAP-Rule" id="MF_00719"/>
    </source>
</evidence>
<comment type="function">
    <text evidence="1">Joins adenosylcobinamide-GDP and alpha-ribazole to generate adenosylcobalamin (Ado-cobalamin). Also synthesizes adenosylcobalamin 5'-phosphate from adenosylcobinamide-GDP and alpha-ribazole 5'-phosphate.</text>
</comment>
<comment type="catalytic activity">
    <reaction evidence="1">
        <text>alpha-ribazole + adenosylcob(III)inamide-GDP = adenosylcob(III)alamin + GMP + H(+)</text>
        <dbReference type="Rhea" id="RHEA:16049"/>
        <dbReference type="ChEBI" id="CHEBI:10329"/>
        <dbReference type="ChEBI" id="CHEBI:15378"/>
        <dbReference type="ChEBI" id="CHEBI:18408"/>
        <dbReference type="ChEBI" id="CHEBI:58115"/>
        <dbReference type="ChEBI" id="CHEBI:60487"/>
        <dbReference type="EC" id="2.7.8.26"/>
    </reaction>
</comment>
<comment type="catalytic activity">
    <reaction evidence="1">
        <text>alpha-ribazole 5'-phosphate + adenosylcob(III)inamide-GDP = adenosylcob(III)alamin 5'-phosphate + GMP + H(+)</text>
        <dbReference type="Rhea" id="RHEA:23560"/>
        <dbReference type="ChEBI" id="CHEBI:15378"/>
        <dbReference type="ChEBI" id="CHEBI:57918"/>
        <dbReference type="ChEBI" id="CHEBI:58115"/>
        <dbReference type="ChEBI" id="CHEBI:60487"/>
        <dbReference type="ChEBI" id="CHEBI:60493"/>
        <dbReference type="EC" id="2.7.8.26"/>
    </reaction>
</comment>
<comment type="cofactor">
    <cofactor evidence="1">
        <name>Mg(2+)</name>
        <dbReference type="ChEBI" id="CHEBI:18420"/>
    </cofactor>
</comment>
<comment type="pathway">
    <text evidence="1">Cofactor biosynthesis; adenosylcobalamin biosynthesis; adenosylcobalamin from cob(II)yrinate a,c-diamide: step 7/7.</text>
</comment>
<comment type="subcellular location">
    <subcellularLocation>
        <location evidence="1">Cell inner membrane</location>
        <topology evidence="1">Multi-pass membrane protein</topology>
    </subcellularLocation>
</comment>
<comment type="similarity">
    <text evidence="1">Belongs to the CobS family.</text>
</comment>
<feature type="chain" id="PRO_1000148031" description="Adenosylcobinamide-GDP ribazoletransferase">
    <location>
        <begin position="1"/>
        <end position="247"/>
    </location>
</feature>
<feature type="transmembrane region" description="Helical" evidence="1">
    <location>
        <begin position="34"/>
        <end position="54"/>
    </location>
</feature>
<feature type="transmembrane region" description="Helical" evidence="1">
    <location>
        <begin position="59"/>
        <end position="79"/>
    </location>
</feature>
<feature type="transmembrane region" description="Helical" evidence="1">
    <location>
        <begin position="113"/>
        <end position="133"/>
    </location>
</feature>
<feature type="transmembrane region" description="Helical" evidence="1">
    <location>
        <begin position="138"/>
        <end position="158"/>
    </location>
</feature>
<feature type="transmembrane region" description="Helical" evidence="1">
    <location>
        <begin position="187"/>
        <end position="207"/>
    </location>
</feature>